<sequence length="420" mass="47359">MSGDTCVQTWPCSYYLELEKRWVPGRLSLTSLSLKFMTDKTRETLVSFPLSSIIEIKKEASHFIFSSITILERDHSKHWFSSLQPSRNAVFSVIEHFWRELLLSESGAAAEAASSSMTKGKELTCLMACTQKRLEDTARVLHHQGEQLDGISRGLDKMESDLDVADRLLTELESPSWWPFSSKLWKTPSETKPKWDASMADSKAFGKEGIVIQVPAVISQRTESHVKPGRLTVLVSGLEIYNSDSLLMHRFEREDVDDIKVHTPYEISICQRFIGKPDISYRLISAKMPEVIPILEVQFSKKIELLEVAMMLGSTRTSSLAEKGYSVWHAASGLMDQATHCEPSSGSQEGRPLQLQTSEPVISEEDTQELGQILRKLKGLALDTETELERQDEALDGITEAVDRATLTIDKHNRRMKKLT</sequence>
<protein>
    <recommendedName>
        <fullName>Synaptosomal-associated protein 47</fullName>
        <shortName>SNAP-47</shortName>
    </recommendedName>
    <alternativeName>
        <fullName>Synaptosomal-associated 47 kDa protein</fullName>
    </alternativeName>
</protein>
<feature type="chain" id="PRO_0000307150" description="Synaptosomal-associated protein 47">
    <location>
        <begin position="1"/>
        <end position="420"/>
    </location>
</feature>
<feature type="domain" description="t-SNARE coiled-coil homology 1" evidence="2">
    <location>
        <begin position="110"/>
        <end position="172"/>
    </location>
</feature>
<feature type="domain" description="t-SNARE coiled-coil homology 2" evidence="2">
    <location>
        <begin position="357"/>
        <end position="419"/>
    </location>
</feature>
<feature type="region of interest" description="Disordered" evidence="3">
    <location>
        <begin position="338"/>
        <end position="357"/>
    </location>
</feature>
<feature type="compositionally biased region" description="Polar residues" evidence="3">
    <location>
        <begin position="342"/>
        <end position="357"/>
    </location>
</feature>
<organism>
    <name type="scientific">Bos taurus</name>
    <name type="common">Bovine</name>
    <dbReference type="NCBI Taxonomy" id="9913"/>
    <lineage>
        <taxon>Eukaryota</taxon>
        <taxon>Metazoa</taxon>
        <taxon>Chordata</taxon>
        <taxon>Craniata</taxon>
        <taxon>Vertebrata</taxon>
        <taxon>Euteleostomi</taxon>
        <taxon>Mammalia</taxon>
        <taxon>Eutheria</taxon>
        <taxon>Laurasiatheria</taxon>
        <taxon>Artiodactyla</taxon>
        <taxon>Ruminantia</taxon>
        <taxon>Pecora</taxon>
        <taxon>Bovidae</taxon>
        <taxon>Bovinae</taxon>
        <taxon>Bos</taxon>
    </lineage>
</organism>
<reference key="1">
    <citation type="submission" date="2007-07" db="EMBL/GenBank/DDBJ databases">
        <authorList>
            <consortium name="NIH - Mammalian Gene Collection (MGC) project"/>
        </authorList>
    </citation>
    <scope>NUCLEOTIDE SEQUENCE [LARGE SCALE MRNA]</scope>
    <source>
        <strain>Hereford</strain>
        <tissue>Brain cortex</tissue>
    </source>
</reference>
<reference key="2">
    <citation type="journal article" date="2010" name="Mol. Psychiatry">
        <title>The dysbindin-containing complex (BLOC-1) in brain: developmental regulation, interaction with SNARE proteins and role in neurite outgrowth.</title>
        <authorList>
            <person name="Ghiani C.A."/>
            <person name="Starcevic M."/>
            <person name="Rodriguez-Fernandez I.A."/>
            <person name="Nazarian R."/>
            <person name="Cheli V.T."/>
            <person name="Chan L.N."/>
            <person name="Malvar J.S."/>
            <person name="de Vellis J."/>
            <person name="Sabatti C."/>
            <person name="Dell'Angelica E.C."/>
        </authorList>
    </citation>
    <scope>ASSOCIATION WITH THE BLOC-1 COMPLEX</scope>
    <scope>INTERACTION WITH BLOC1S6</scope>
</reference>
<dbReference type="EMBL" id="BC149093">
    <property type="protein sequence ID" value="AAI49094.1"/>
    <property type="molecule type" value="mRNA"/>
</dbReference>
<dbReference type="RefSeq" id="NP_001095790.1">
    <property type="nucleotide sequence ID" value="NM_001102320.1"/>
</dbReference>
<dbReference type="SMR" id="A6QP11"/>
<dbReference type="FunCoup" id="A6QP11">
    <property type="interactions" value="1608"/>
</dbReference>
<dbReference type="STRING" id="9913.ENSBTAP00000005482"/>
<dbReference type="PaxDb" id="9913-ENSBTAP00000005482"/>
<dbReference type="GeneID" id="618546"/>
<dbReference type="KEGG" id="bta:618546"/>
<dbReference type="CTD" id="116841"/>
<dbReference type="eggNOG" id="KOG3065">
    <property type="taxonomic scope" value="Eukaryota"/>
</dbReference>
<dbReference type="InParanoid" id="A6QP11"/>
<dbReference type="OrthoDB" id="10009801at2759"/>
<dbReference type="Proteomes" id="UP000009136">
    <property type="component" value="Unplaced"/>
</dbReference>
<dbReference type="GO" id="GO:0012505">
    <property type="term" value="C:endomembrane system"/>
    <property type="evidence" value="ECO:0007669"/>
    <property type="project" value="UniProtKB-SubCell"/>
</dbReference>
<dbReference type="GO" id="GO:0048471">
    <property type="term" value="C:perinuclear region of cytoplasm"/>
    <property type="evidence" value="ECO:0007669"/>
    <property type="project" value="UniProtKB-SubCell"/>
</dbReference>
<dbReference type="GO" id="GO:0005886">
    <property type="term" value="C:plasma membrane"/>
    <property type="evidence" value="ECO:0000318"/>
    <property type="project" value="GO_Central"/>
</dbReference>
<dbReference type="GO" id="GO:0098793">
    <property type="term" value="C:presynapse"/>
    <property type="evidence" value="ECO:0007669"/>
    <property type="project" value="GOC"/>
</dbReference>
<dbReference type="GO" id="GO:0031201">
    <property type="term" value="C:SNARE complex"/>
    <property type="evidence" value="ECO:0000318"/>
    <property type="project" value="GO_Central"/>
</dbReference>
<dbReference type="GO" id="GO:0005484">
    <property type="term" value="F:SNAP receptor activity"/>
    <property type="evidence" value="ECO:0000318"/>
    <property type="project" value="GO_Central"/>
</dbReference>
<dbReference type="GO" id="GO:0019905">
    <property type="term" value="F:syntaxin binding"/>
    <property type="evidence" value="ECO:0000318"/>
    <property type="project" value="GO_Central"/>
</dbReference>
<dbReference type="GO" id="GO:0006887">
    <property type="term" value="P:exocytosis"/>
    <property type="evidence" value="ECO:0000318"/>
    <property type="project" value="GO_Central"/>
</dbReference>
<dbReference type="GO" id="GO:0031629">
    <property type="term" value="P:synaptic vesicle fusion to presynaptic active zone membrane"/>
    <property type="evidence" value="ECO:0000318"/>
    <property type="project" value="GO_Central"/>
</dbReference>
<dbReference type="GO" id="GO:0016082">
    <property type="term" value="P:synaptic vesicle priming"/>
    <property type="evidence" value="ECO:0000318"/>
    <property type="project" value="GO_Central"/>
</dbReference>
<dbReference type="CDD" id="cd15854">
    <property type="entry name" value="SNARE_SNAP47C"/>
    <property type="match status" value="1"/>
</dbReference>
<dbReference type="CDD" id="cd15888">
    <property type="entry name" value="SNARE_SNAP47N"/>
    <property type="match status" value="1"/>
</dbReference>
<dbReference type="FunFam" id="2.30.29.30:FF:000269">
    <property type="entry name" value="Synaptosomal-associated protein 47"/>
    <property type="match status" value="1"/>
</dbReference>
<dbReference type="FunFam" id="1.20.5.110:FF:000052">
    <property type="entry name" value="synaptosomal-associated protein 47"/>
    <property type="match status" value="1"/>
</dbReference>
<dbReference type="FunFam" id="1.20.5.110:FF:000061">
    <property type="entry name" value="Synaptosome associated protein 47"/>
    <property type="match status" value="1"/>
</dbReference>
<dbReference type="Gene3D" id="1.20.5.110">
    <property type="match status" value="2"/>
</dbReference>
<dbReference type="Gene3D" id="2.30.29.30">
    <property type="entry name" value="Pleckstrin-homology domain (PH domain)/Phosphotyrosine-binding domain (PTB)"/>
    <property type="match status" value="1"/>
</dbReference>
<dbReference type="InterPro" id="IPR011993">
    <property type="entry name" value="PH-like_dom_sf"/>
</dbReference>
<dbReference type="InterPro" id="IPR000727">
    <property type="entry name" value="T_SNARE_dom"/>
</dbReference>
<dbReference type="PANTHER" id="PTHR19305">
    <property type="entry name" value="SYNAPTOSOMAL ASSOCIATED PROTEIN"/>
    <property type="match status" value="1"/>
</dbReference>
<dbReference type="PANTHER" id="PTHR19305:SF1">
    <property type="entry name" value="SYNAPTOSOMAL-ASSOCIATED PROTEIN 47"/>
    <property type="match status" value="1"/>
</dbReference>
<dbReference type="SMART" id="SM00397">
    <property type="entry name" value="t_SNARE"/>
    <property type="match status" value="1"/>
</dbReference>
<dbReference type="SUPFAM" id="SSF58038">
    <property type="entry name" value="SNARE fusion complex"/>
    <property type="match status" value="2"/>
</dbReference>
<dbReference type="PROSITE" id="PS50192">
    <property type="entry name" value="T_SNARE"/>
    <property type="match status" value="2"/>
</dbReference>
<comment type="function">
    <text evidence="1">May play a role in intracellular membrane fusion.</text>
</comment>
<comment type="subunit">
    <text evidence="1 4">Forms a complex containing SNAP47, VAMP2 and STX1A (By similarity). Associates with the BLOC-1 complex. Interacts with BLOC1S6.</text>
</comment>
<comment type="subcellular location">
    <subcellularLocation>
        <location evidence="1">Endomembrane system</location>
    </subcellularLocation>
    <subcellularLocation>
        <location evidence="1">Cytoplasm</location>
        <location evidence="1">Perinuclear region</location>
    </subcellularLocation>
    <text evidence="1">Appears to be exclusively membrane-bound.</text>
</comment>
<comment type="similarity">
    <text evidence="5">Belongs to the SVAP1 family.</text>
</comment>
<proteinExistence type="evidence at protein level"/>
<name>SNP47_BOVIN</name>
<keyword id="KW-0175">Coiled coil</keyword>
<keyword id="KW-0963">Cytoplasm</keyword>
<keyword id="KW-0472">Membrane</keyword>
<keyword id="KW-1185">Reference proteome</keyword>
<keyword id="KW-0677">Repeat</keyword>
<evidence type="ECO:0000250" key="1"/>
<evidence type="ECO:0000255" key="2">
    <source>
        <dbReference type="PROSITE-ProRule" id="PRU00202"/>
    </source>
</evidence>
<evidence type="ECO:0000256" key="3">
    <source>
        <dbReference type="SAM" id="MobiDB-lite"/>
    </source>
</evidence>
<evidence type="ECO:0000269" key="4">
    <source>
    </source>
</evidence>
<evidence type="ECO:0000305" key="5"/>
<gene>
    <name type="primary">SNAP47</name>
</gene>
<accession>A6QP11</accession>